<dbReference type="EC" id="5.6.1.7" evidence="1"/>
<dbReference type="EMBL" id="M91673">
    <property type="protein sequence ID" value="AAA25298.1"/>
    <property type="molecule type" value="Genomic_DNA"/>
</dbReference>
<dbReference type="EMBL" id="AE017354">
    <property type="protein sequence ID" value="AAU26777.1"/>
    <property type="status" value="ALT_INIT"/>
    <property type="molecule type" value="Genomic_DNA"/>
</dbReference>
<dbReference type="PIR" id="A41468">
    <property type="entry name" value="A41468"/>
</dbReference>
<dbReference type="RefSeq" id="YP_094724.1">
    <property type="nucleotide sequence ID" value="NC_002942.5"/>
</dbReference>
<dbReference type="SMR" id="Q5ZXP3"/>
<dbReference type="STRING" id="272624.lpg0688"/>
<dbReference type="PaxDb" id="272624-lpg0688"/>
<dbReference type="KEGG" id="lpn:lpg0688"/>
<dbReference type="PATRIC" id="fig|272624.6.peg.709"/>
<dbReference type="eggNOG" id="COG0459">
    <property type="taxonomic scope" value="Bacteria"/>
</dbReference>
<dbReference type="HOGENOM" id="CLU_016503_3_0_6"/>
<dbReference type="OrthoDB" id="9766614at2"/>
<dbReference type="Proteomes" id="UP000000609">
    <property type="component" value="Chromosome"/>
</dbReference>
<dbReference type="GO" id="GO:0009986">
    <property type="term" value="C:cell surface"/>
    <property type="evidence" value="ECO:0000314"/>
    <property type="project" value="CAFA"/>
</dbReference>
<dbReference type="GO" id="GO:0005737">
    <property type="term" value="C:cytoplasm"/>
    <property type="evidence" value="ECO:0007669"/>
    <property type="project" value="UniProtKB-SubCell"/>
</dbReference>
<dbReference type="GO" id="GO:0044175">
    <property type="term" value="C:host cell endosome membrane"/>
    <property type="evidence" value="ECO:0000314"/>
    <property type="project" value="CAFA"/>
</dbReference>
<dbReference type="GO" id="GO:0005524">
    <property type="term" value="F:ATP binding"/>
    <property type="evidence" value="ECO:0007669"/>
    <property type="project" value="UniProtKB-UniRule"/>
</dbReference>
<dbReference type="GO" id="GO:0140662">
    <property type="term" value="F:ATP-dependent protein folding chaperone"/>
    <property type="evidence" value="ECO:0007669"/>
    <property type="project" value="InterPro"/>
</dbReference>
<dbReference type="GO" id="GO:0046812">
    <property type="term" value="F:host cell surface binding"/>
    <property type="evidence" value="ECO:0000314"/>
    <property type="project" value="CAFA"/>
</dbReference>
<dbReference type="GO" id="GO:0016853">
    <property type="term" value="F:isomerase activity"/>
    <property type="evidence" value="ECO:0007669"/>
    <property type="project" value="UniProtKB-KW"/>
</dbReference>
<dbReference type="GO" id="GO:0051082">
    <property type="term" value="F:unfolded protein binding"/>
    <property type="evidence" value="ECO:0007669"/>
    <property type="project" value="UniProtKB-UniRule"/>
</dbReference>
<dbReference type="GO" id="GO:0044650">
    <property type="term" value="P:adhesion of symbiont to host cell"/>
    <property type="evidence" value="ECO:0000314"/>
    <property type="project" value="CAFA"/>
</dbReference>
<dbReference type="GO" id="GO:0042026">
    <property type="term" value="P:protein refolding"/>
    <property type="evidence" value="ECO:0007669"/>
    <property type="project" value="UniProtKB-UniRule"/>
</dbReference>
<dbReference type="GO" id="GO:2000535">
    <property type="term" value="P:regulation of entry of bacterium into host cell"/>
    <property type="evidence" value="ECO:0000314"/>
    <property type="project" value="CAFA"/>
</dbReference>
<dbReference type="CDD" id="cd03344">
    <property type="entry name" value="GroEL"/>
    <property type="match status" value="1"/>
</dbReference>
<dbReference type="FunFam" id="1.10.560.10:FF:000001">
    <property type="entry name" value="60 kDa chaperonin"/>
    <property type="match status" value="1"/>
</dbReference>
<dbReference type="FunFam" id="3.50.7.10:FF:000001">
    <property type="entry name" value="60 kDa chaperonin"/>
    <property type="match status" value="1"/>
</dbReference>
<dbReference type="Gene3D" id="3.50.7.10">
    <property type="entry name" value="GroEL"/>
    <property type="match status" value="1"/>
</dbReference>
<dbReference type="Gene3D" id="1.10.560.10">
    <property type="entry name" value="GroEL-like equatorial domain"/>
    <property type="match status" value="1"/>
</dbReference>
<dbReference type="Gene3D" id="3.30.260.10">
    <property type="entry name" value="TCP-1-like chaperonin intermediate domain"/>
    <property type="match status" value="1"/>
</dbReference>
<dbReference type="HAMAP" id="MF_00600">
    <property type="entry name" value="CH60"/>
    <property type="match status" value="1"/>
</dbReference>
<dbReference type="InterPro" id="IPR018370">
    <property type="entry name" value="Chaperonin_Cpn60_CS"/>
</dbReference>
<dbReference type="InterPro" id="IPR001844">
    <property type="entry name" value="Cpn60/GroEL"/>
</dbReference>
<dbReference type="InterPro" id="IPR002423">
    <property type="entry name" value="Cpn60/GroEL/TCP-1"/>
</dbReference>
<dbReference type="InterPro" id="IPR027409">
    <property type="entry name" value="GroEL-like_apical_dom_sf"/>
</dbReference>
<dbReference type="InterPro" id="IPR027413">
    <property type="entry name" value="GROEL-like_equatorial_sf"/>
</dbReference>
<dbReference type="InterPro" id="IPR027410">
    <property type="entry name" value="TCP-1-like_intermed_sf"/>
</dbReference>
<dbReference type="NCBIfam" id="TIGR02348">
    <property type="entry name" value="GroEL"/>
    <property type="match status" value="1"/>
</dbReference>
<dbReference type="NCBIfam" id="NF000592">
    <property type="entry name" value="PRK00013.1"/>
    <property type="match status" value="1"/>
</dbReference>
<dbReference type="NCBIfam" id="NF009487">
    <property type="entry name" value="PRK12849.1"/>
    <property type="match status" value="1"/>
</dbReference>
<dbReference type="NCBIfam" id="NF009488">
    <property type="entry name" value="PRK12850.1"/>
    <property type="match status" value="1"/>
</dbReference>
<dbReference type="NCBIfam" id="NF009489">
    <property type="entry name" value="PRK12851.1"/>
    <property type="match status" value="1"/>
</dbReference>
<dbReference type="PANTHER" id="PTHR45633">
    <property type="entry name" value="60 KDA HEAT SHOCK PROTEIN, MITOCHONDRIAL"/>
    <property type="match status" value="1"/>
</dbReference>
<dbReference type="Pfam" id="PF00118">
    <property type="entry name" value="Cpn60_TCP1"/>
    <property type="match status" value="1"/>
</dbReference>
<dbReference type="PRINTS" id="PR00298">
    <property type="entry name" value="CHAPERONIN60"/>
</dbReference>
<dbReference type="SUPFAM" id="SSF52029">
    <property type="entry name" value="GroEL apical domain-like"/>
    <property type="match status" value="1"/>
</dbReference>
<dbReference type="SUPFAM" id="SSF48592">
    <property type="entry name" value="GroEL equatorial domain-like"/>
    <property type="match status" value="1"/>
</dbReference>
<dbReference type="SUPFAM" id="SSF54849">
    <property type="entry name" value="GroEL-intermediate domain like"/>
    <property type="match status" value="1"/>
</dbReference>
<dbReference type="PROSITE" id="PS00296">
    <property type="entry name" value="CHAPERONINS_CPN60"/>
    <property type="match status" value="1"/>
</dbReference>
<feature type="chain" id="PRO_0000063408" description="Chaperonin GroEL">
    <location>
        <begin position="1"/>
        <end position="548"/>
    </location>
</feature>
<feature type="binding site" evidence="1">
    <location>
        <begin position="29"/>
        <end position="32"/>
    </location>
    <ligand>
        <name>ATP</name>
        <dbReference type="ChEBI" id="CHEBI:30616"/>
    </ligand>
</feature>
<feature type="binding site" evidence="1">
    <location>
        <position position="50"/>
    </location>
    <ligand>
        <name>ATP</name>
        <dbReference type="ChEBI" id="CHEBI:30616"/>
    </ligand>
</feature>
<feature type="binding site" evidence="1">
    <location>
        <begin position="86"/>
        <end position="90"/>
    </location>
    <ligand>
        <name>ATP</name>
        <dbReference type="ChEBI" id="CHEBI:30616"/>
    </ligand>
</feature>
<feature type="binding site" evidence="1">
    <location>
        <position position="414"/>
    </location>
    <ligand>
        <name>ATP</name>
        <dbReference type="ChEBI" id="CHEBI:30616"/>
    </ligand>
</feature>
<feature type="binding site" evidence="1">
    <location>
        <begin position="478"/>
        <end position="480"/>
    </location>
    <ligand>
        <name>ATP</name>
        <dbReference type="ChEBI" id="CHEBI:30616"/>
    </ligand>
</feature>
<feature type="binding site" evidence="1">
    <location>
        <position position="494"/>
    </location>
    <ligand>
        <name>ATP</name>
        <dbReference type="ChEBI" id="CHEBI:30616"/>
    </ligand>
</feature>
<feature type="sequence conflict" description="In Ref. 1; AAA25298." evidence="2" ref="1">
    <original>FDRGYI</original>
    <variation>LIAVH</variation>
    <location>
        <begin position="194"/>
        <end position="199"/>
    </location>
</feature>
<proteinExistence type="inferred from homology"/>
<evidence type="ECO:0000255" key="1">
    <source>
        <dbReference type="HAMAP-Rule" id="MF_00600"/>
    </source>
</evidence>
<evidence type="ECO:0000305" key="2"/>
<sequence>MAKELRFGDDARLQMLAGVNALADAVQVTMGPRGRNVVLEKSYGAPTVTKDGVSVAKEIEFEHRFMNMGAQMVKEVASKTSDTAGDGTTTATVLARSILVEGHKAVAAGMNPMDLKRGIDKAVLAVTKKLQAMSKPCKDSKAIAQVGTISANSDEAIGAIIAEAMEKVGKEGVITVEDGNGLENELSVVEGMQFDRGYISPYFINNQQNMSCELEHPFILLVDKKVSSIREMLSVLEGVAKSGRPLLIIAEDVEGEALATLVVNNMRGIVKVCAVKAPGFGDRRKAMLQDIAILTKGQVISEEIGKSLEGATLEDLGSAKRIVVTKENTTIIDGEGKATEINARITQIRAQMEETTSDYDREKLQERVAKLAGGVAVIKVGAATEVEMKEKKARVEDALHATRAAVEEGIVAGGGVALIRAQKALDSLKGDNDDQNMGINILRRAIESPMRQIVTNAGYEASVVVNKVAEHKDNYGFNAATGEYGDMVEMGILDPTKVTRMALQNAASVASLMLTTECMVADLPKKEEGVGAGDMGGMGGMGGMGGMM</sequence>
<accession>Q5ZXP3</accession>
<accession>P26878</accession>
<gene>
    <name evidence="1" type="primary">groEL</name>
    <name evidence="1" type="synonym">groL</name>
    <name type="synonym">htpB</name>
    <name type="synonym">mopA</name>
    <name type="ordered locus">lpg0688</name>
</gene>
<keyword id="KW-0067">ATP-binding</keyword>
<keyword id="KW-0143">Chaperone</keyword>
<keyword id="KW-0963">Cytoplasm</keyword>
<keyword id="KW-0413">Isomerase</keyword>
<keyword id="KW-0547">Nucleotide-binding</keyword>
<keyword id="KW-1185">Reference proteome</keyword>
<keyword id="KW-0346">Stress response</keyword>
<name>CH60_LEGPH</name>
<comment type="function">
    <text evidence="1">Together with its co-chaperonin GroES, plays an essential role in assisting protein folding. The GroEL-GroES system forms a nano-cage that allows encapsulation of the non-native substrate proteins and provides a physical environment optimized to promote and accelerate protein folding.</text>
</comment>
<comment type="function">
    <text>May play a protective role against the defense mechanisms generated by the infected macrophages.</text>
</comment>
<comment type="catalytic activity">
    <reaction evidence="1">
        <text>ATP + H2O + a folded polypeptide = ADP + phosphate + an unfolded polypeptide.</text>
        <dbReference type="EC" id="5.6.1.7"/>
    </reaction>
</comment>
<comment type="subunit">
    <text evidence="1">Forms a cylinder of 14 subunits composed of two heptameric rings stacked back-to-back. Interacts with the co-chaperonin GroES.</text>
</comment>
<comment type="subcellular location">
    <subcellularLocation>
        <location evidence="1">Cytoplasm</location>
    </subcellularLocation>
</comment>
<comment type="similarity">
    <text evidence="1">Belongs to the chaperonin (HSP60) family.</text>
</comment>
<comment type="sequence caution" evidence="2">
    <conflict type="erroneous initiation">
        <sequence resource="EMBL-CDS" id="AAU26777"/>
    </conflict>
</comment>
<protein>
    <recommendedName>
        <fullName evidence="1">Chaperonin GroEL</fullName>
        <ecNumber evidence="1">5.6.1.7</ecNumber>
    </recommendedName>
    <alternativeName>
        <fullName evidence="1">60 kDa chaperonin</fullName>
    </alternativeName>
    <alternativeName>
        <fullName evidence="1">Chaperonin-60</fullName>
        <shortName evidence="1">Cpn60</shortName>
    </alternativeName>
</protein>
<reference key="1">
    <citation type="journal article" date="1990" name="Infect. Immun.">
        <title>Nucleotide sequence of htpB, the Legionella pneumophila gene encoding the 58-kilodalton (kDa) common antigen, formerly designated the 60-kDa common antigen.</title>
        <authorList>
            <person name="Sampson J.S."/>
            <person name="O'Connor S.P."/>
            <person name="Holloway B.P."/>
            <person name="Plikaytis B.B."/>
            <person name="Carlone G.M."/>
            <person name="Mayer L.W."/>
        </authorList>
    </citation>
    <scope>NUCLEOTIDE SEQUENCE [GENOMIC DNA]</scope>
</reference>
<reference key="2">
    <citation type="journal article" date="2004" name="Science">
        <title>The genomic sequence of the accidental pathogen Legionella pneumophila.</title>
        <authorList>
            <person name="Chien M."/>
            <person name="Morozova I."/>
            <person name="Shi S."/>
            <person name="Sheng H."/>
            <person name="Chen J."/>
            <person name="Gomez S.M."/>
            <person name="Asamani G."/>
            <person name="Hill K."/>
            <person name="Nuara J."/>
            <person name="Feder M."/>
            <person name="Rineer J."/>
            <person name="Greenberg J.J."/>
            <person name="Steshenko V."/>
            <person name="Park S.H."/>
            <person name="Zhao B."/>
            <person name="Teplitskaya E."/>
            <person name="Edwards J.R."/>
            <person name="Pampou S."/>
            <person name="Georghiou A."/>
            <person name="Chou I.-C."/>
            <person name="Iannuccilli W."/>
            <person name="Ulz M.E."/>
            <person name="Kim D.H."/>
            <person name="Geringer-Sameth A."/>
            <person name="Goldsberry C."/>
            <person name="Morozov P."/>
            <person name="Fischer S.G."/>
            <person name="Segal G."/>
            <person name="Qu X."/>
            <person name="Rzhetsky A."/>
            <person name="Zhang P."/>
            <person name="Cayanis E."/>
            <person name="De Jong P.J."/>
            <person name="Ju J."/>
            <person name="Kalachikov S."/>
            <person name="Shuman H.A."/>
            <person name="Russo J.J."/>
        </authorList>
    </citation>
    <scope>NUCLEOTIDE SEQUENCE [LARGE SCALE GENOMIC DNA]</scope>
    <source>
        <strain>Philadelphia 1 / ATCC 33152 / DSM 7513</strain>
    </source>
</reference>
<organism>
    <name type="scientific">Legionella pneumophila subsp. pneumophila (strain Philadelphia 1 / ATCC 33152 / DSM 7513)</name>
    <dbReference type="NCBI Taxonomy" id="272624"/>
    <lineage>
        <taxon>Bacteria</taxon>
        <taxon>Pseudomonadati</taxon>
        <taxon>Pseudomonadota</taxon>
        <taxon>Gammaproteobacteria</taxon>
        <taxon>Legionellales</taxon>
        <taxon>Legionellaceae</taxon>
        <taxon>Legionella</taxon>
    </lineage>
</organism>